<organism>
    <name type="scientific">Bacillus anthracis</name>
    <dbReference type="NCBI Taxonomy" id="1392"/>
    <lineage>
        <taxon>Bacteria</taxon>
        <taxon>Bacillati</taxon>
        <taxon>Bacillota</taxon>
        <taxon>Bacilli</taxon>
        <taxon>Bacillales</taxon>
        <taxon>Bacillaceae</taxon>
        <taxon>Bacillus</taxon>
        <taxon>Bacillus cereus group</taxon>
    </lineage>
</organism>
<reference key="1">
    <citation type="journal article" date="2003" name="Nature">
        <title>The genome sequence of Bacillus anthracis Ames and comparison to closely related bacteria.</title>
        <authorList>
            <person name="Read T.D."/>
            <person name="Peterson S.N."/>
            <person name="Tourasse N.J."/>
            <person name="Baillie L.W."/>
            <person name="Paulsen I.T."/>
            <person name="Nelson K.E."/>
            <person name="Tettelin H."/>
            <person name="Fouts D.E."/>
            <person name="Eisen J.A."/>
            <person name="Gill S.R."/>
            <person name="Holtzapple E.K."/>
            <person name="Okstad O.A."/>
            <person name="Helgason E."/>
            <person name="Rilstone J."/>
            <person name="Wu M."/>
            <person name="Kolonay J.F."/>
            <person name="Beanan M.J."/>
            <person name="Dodson R.J."/>
            <person name="Brinkac L.M."/>
            <person name="Gwinn M.L."/>
            <person name="DeBoy R.T."/>
            <person name="Madpu R."/>
            <person name="Daugherty S.C."/>
            <person name="Durkin A.S."/>
            <person name="Haft D.H."/>
            <person name="Nelson W.C."/>
            <person name="Peterson J.D."/>
            <person name="Pop M."/>
            <person name="Khouri H.M."/>
            <person name="Radune D."/>
            <person name="Benton J.L."/>
            <person name="Mahamoud Y."/>
            <person name="Jiang L."/>
            <person name="Hance I.R."/>
            <person name="Weidman J.F."/>
            <person name="Berry K.J."/>
            <person name="Plaut R.D."/>
            <person name="Wolf A.M."/>
            <person name="Watkins K.L."/>
            <person name="Nierman W.C."/>
            <person name="Hazen A."/>
            <person name="Cline R.T."/>
            <person name="Redmond C."/>
            <person name="Thwaite J.E."/>
            <person name="White O."/>
            <person name="Salzberg S.L."/>
            <person name="Thomason B."/>
            <person name="Friedlander A.M."/>
            <person name="Koehler T.M."/>
            <person name="Hanna P.C."/>
            <person name="Kolstoe A.-B."/>
            <person name="Fraser C.M."/>
        </authorList>
    </citation>
    <scope>NUCLEOTIDE SEQUENCE [LARGE SCALE GENOMIC DNA]</scope>
    <source>
        <strain>Ames / isolate Porton</strain>
    </source>
</reference>
<reference key="2">
    <citation type="journal article" date="2009" name="J. Bacteriol.">
        <title>The complete genome sequence of Bacillus anthracis Ames 'Ancestor'.</title>
        <authorList>
            <person name="Ravel J."/>
            <person name="Jiang L."/>
            <person name="Stanley S.T."/>
            <person name="Wilson M.R."/>
            <person name="Decker R.S."/>
            <person name="Read T.D."/>
            <person name="Worsham P."/>
            <person name="Keim P.S."/>
            <person name="Salzberg S.L."/>
            <person name="Fraser-Liggett C.M."/>
            <person name="Rasko D.A."/>
        </authorList>
    </citation>
    <scope>NUCLEOTIDE SEQUENCE [LARGE SCALE GENOMIC DNA]</scope>
    <source>
        <strain>Ames ancestor</strain>
    </source>
</reference>
<reference key="3">
    <citation type="submission" date="2004-01" db="EMBL/GenBank/DDBJ databases">
        <title>Complete genome sequence of Bacillus anthracis Sterne.</title>
        <authorList>
            <person name="Brettin T.S."/>
            <person name="Bruce D."/>
            <person name="Challacombe J.F."/>
            <person name="Gilna P."/>
            <person name="Han C."/>
            <person name="Hill K."/>
            <person name="Hitchcock P."/>
            <person name="Jackson P."/>
            <person name="Keim P."/>
            <person name="Longmire J."/>
            <person name="Lucas S."/>
            <person name="Okinaka R."/>
            <person name="Richardson P."/>
            <person name="Rubin E."/>
            <person name="Tice H."/>
        </authorList>
    </citation>
    <scope>NUCLEOTIDE SEQUENCE [LARGE SCALE GENOMIC DNA]</scope>
    <source>
        <strain>Sterne</strain>
    </source>
</reference>
<gene>
    <name evidence="1" type="primary">clpP1</name>
    <name type="ordered locus">BA_2788</name>
    <name type="ordered locus">GBAA_2788</name>
    <name type="ordered locus">BAS2599</name>
</gene>
<feature type="chain" id="PRO_0000179484" description="ATP-dependent Clp protease proteolytic subunit 1">
    <location>
        <begin position="1"/>
        <end position="193"/>
    </location>
</feature>
<feature type="active site" description="Nucleophile" evidence="1">
    <location>
        <position position="98"/>
    </location>
</feature>
<feature type="active site" evidence="1">
    <location>
        <position position="123"/>
    </location>
</feature>
<comment type="function">
    <text evidence="1">Cleaves peptides in various proteins in a process that requires ATP hydrolysis. Has a chymotrypsin-like activity. Plays a major role in the degradation of misfolded proteins.</text>
</comment>
<comment type="catalytic activity">
    <reaction evidence="1">
        <text>Hydrolysis of proteins to small peptides in the presence of ATP and magnesium. alpha-casein is the usual test substrate. In the absence of ATP, only oligopeptides shorter than five residues are hydrolyzed (such as succinyl-Leu-Tyr-|-NHMec, and Leu-Tyr-Leu-|-Tyr-Trp, in which cleavage of the -Tyr-|-Leu- and -Tyr-|-Trp bonds also occurs).</text>
        <dbReference type="EC" id="3.4.21.92"/>
    </reaction>
</comment>
<comment type="subunit">
    <text evidence="1">Fourteen ClpP subunits assemble into 2 heptameric rings which stack back to back to give a disk-like structure with a central cavity, resembling the structure of eukaryotic proteasomes.</text>
</comment>
<comment type="subcellular location">
    <subcellularLocation>
        <location evidence="1">Cytoplasm</location>
    </subcellularLocation>
</comment>
<comment type="similarity">
    <text evidence="1">Belongs to the peptidase S14 family.</text>
</comment>
<accession>Q81PL4</accession>
<accession>Q6HXT0</accession>
<accession>Q6KRV1</accession>
<dbReference type="EC" id="3.4.21.92" evidence="1"/>
<dbReference type="EMBL" id="AE016879">
    <property type="protein sequence ID" value="AAP26623.1"/>
    <property type="molecule type" value="Genomic_DNA"/>
</dbReference>
<dbReference type="EMBL" id="AE017334">
    <property type="protein sequence ID" value="AAT31905.1"/>
    <property type="molecule type" value="Genomic_DNA"/>
</dbReference>
<dbReference type="EMBL" id="AE017225">
    <property type="protein sequence ID" value="AAT54909.1"/>
    <property type="molecule type" value="Genomic_DNA"/>
</dbReference>
<dbReference type="RefSeq" id="NP_845137.1">
    <property type="nucleotide sequence ID" value="NC_003997.3"/>
</dbReference>
<dbReference type="RefSeq" id="YP_028858.1">
    <property type="nucleotide sequence ID" value="NC_005945.1"/>
</dbReference>
<dbReference type="SMR" id="Q81PL4"/>
<dbReference type="STRING" id="261594.GBAA_2788"/>
<dbReference type="MEROPS" id="S14.001"/>
<dbReference type="DNASU" id="1086459"/>
<dbReference type="GeneID" id="45022626"/>
<dbReference type="KEGG" id="ban:BA_2788"/>
<dbReference type="KEGG" id="bar:GBAA_2788"/>
<dbReference type="KEGG" id="bat:BAS2599"/>
<dbReference type="PATRIC" id="fig|198094.11.peg.2771"/>
<dbReference type="eggNOG" id="COG0740">
    <property type="taxonomic scope" value="Bacteria"/>
</dbReference>
<dbReference type="HOGENOM" id="CLU_058707_3_2_9"/>
<dbReference type="OMA" id="GIFDTMQ"/>
<dbReference type="OrthoDB" id="9802800at2"/>
<dbReference type="Proteomes" id="UP000000427">
    <property type="component" value="Chromosome"/>
</dbReference>
<dbReference type="Proteomes" id="UP000000594">
    <property type="component" value="Chromosome"/>
</dbReference>
<dbReference type="GO" id="GO:0005737">
    <property type="term" value="C:cytoplasm"/>
    <property type="evidence" value="ECO:0007669"/>
    <property type="project" value="UniProtKB-SubCell"/>
</dbReference>
<dbReference type="GO" id="GO:0009368">
    <property type="term" value="C:endopeptidase Clp complex"/>
    <property type="evidence" value="ECO:0007669"/>
    <property type="project" value="TreeGrafter"/>
</dbReference>
<dbReference type="GO" id="GO:0004176">
    <property type="term" value="F:ATP-dependent peptidase activity"/>
    <property type="evidence" value="ECO:0007669"/>
    <property type="project" value="InterPro"/>
</dbReference>
<dbReference type="GO" id="GO:0051117">
    <property type="term" value="F:ATPase binding"/>
    <property type="evidence" value="ECO:0007669"/>
    <property type="project" value="TreeGrafter"/>
</dbReference>
<dbReference type="GO" id="GO:0004252">
    <property type="term" value="F:serine-type endopeptidase activity"/>
    <property type="evidence" value="ECO:0007669"/>
    <property type="project" value="UniProtKB-UniRule"/>
</dbReference>
<dbReference type="GO" id="GO:0006515">
    <property type="term" value="P:protein quality control for misfolded or incompletely synthesized proteins"/>
    <property type="evidence" value="ECO:0007669"/>
    <property type="project" value="TreeGrafter"/>
</dbReference>
<dbReference type="CDD" id="cd07017">
    <property type="entry name" value="S14_ClpP_2"/>
    <property type="match status" value="1"/>
</dbReference>
<dbReference type="FunFam" id="3.90.226.10:FF:000001">
    <property type="entry name" value="ATP-dependent Clp protease proteolytic subunit"/>
    <property type="match status" value="1"/>
</dbReference>
<dbReference type="Gene3D" id="3.90.226.10">
    <property type="entry name" value="2-enoyl-CoA Hydratase, Chain A, domain 1"/>
    <property type="match status" value="1"/>
</dbReference>
<dbReference type="HAMAP" id="MF_00444">
    <property type="entry name" value="ClpP"/>
    <property type="match status" value="1"/>
</dbReference>
<dbReference type="InterPro" id="IPR001907">
    <property type="entry name" value="ClpP"/>
</dbReference>
<dbReference type="InterPro" id="IPR029045">
    <property type="entry name" value="ClpP/crotonase-like_dom_sf"/>
</dbReference>
<dbReference type="InterPro" id="IPR023562">
    <property type="entry name" value="ClpP/TepA"/>
</dbReference>
<dbReference type="InterPro" id="IPR033135">
    <property type="entry name" value="ClpP_His_AS"/>
</dbReference>
<dbReference type="NCBIfam" id="TIGR00493">
    <property type="entry name" value="clpP"/>
    <property type="match status" value="1"/>
</dbReference>
<dbReference type="NCBIfam" id="NF001368">
    <property type="entry name" value="PRK00277.1"/>
    <property type="match status" value="1"/>
</dbReference>
<dbReference type="NCBIfam" id="NF009205">
    <property type="entry name" value="PRK12553.1"/>
    <property type="match status" value="1"/>
</dbReference>
<dbReference type="PANTHER" id="PTHR10381">
    <property type="entry name" value="ATP-DEPENDENT CLP PROTEASE PROTEOLYTIC SUBUNIT"/>
    <property type="match status" value="1"/>
</dbReference>
<dbReference type="PANTHER" id="PTHR10381:SF70">
    <property type="entry name" value="ATP-DEPENDENT CLP PROTEASE PROTEOLYTIC SUBUNIT"/>
    <property type="match status" value="1"/>
</dbReference>
<dbReference type="Pfam" id="PF00574">
    <property type="entry name" value="CLP_protease"/>
    <property type="match status" value="1"/>
</dbReference>
<dbReference type="PRINTS" id="PR00127">
    <property type="entry name" value="CLPPROTEASEP"/>
</dbReference>
<dbReference type="SUPFAM" id="SSF52096">
    <property type="entry name" value="ClpP/crotonase"/>
    <property type="match status" value="1"/>
</dbReference>
<dbReference type="PROSITE" id="PS00382">
    <property type="entry name" value="CLP_PROTEASE_HIS"/>
    <property type="match status" value="1"/>
</dbReference>
<proteinExistence type="inferred from homology"/>
<keyword id="KW-0963">Cytoplasm</keyword>
<keyword id="KW-0378">Hydrolase</keyword>
<keyword id="KW-0645">Protease</keyword>
<keyword id="KW-1185">Reference proteome</keyword>
<keyword id="KW-0720">Serine protease</keyword>
<evidence type="ECO:0000255" key="1">
    <source>
        <dbReference type="HAMAP-Rule" id="MF_00444"/>
    </source>
</evidence>
<sequence length="193" mass="21178">MNAIPYVVEQTKLGERSYDIYSRLLKDRIVIIGSEINDQVASSVVAQLLFLEAEDAEKDIFLYINSPGGSTTAGFAILDTMNLIKPDVQTLCMGFAASFGALLLLSGAKGKRFALPNSEIMIHQPLGGAQGQATEIEITAKRILKLKHDINKMIAEKTGQPIERVAHDTERDYFMTAEEAKAYGIVDDVVTKK</sequence>
<protein>
    <recommendedName>
        <fullName evidence="1">ATP-dependent Clp protease proteolytic subunit 1</fullName>
        <ecNumber evidence="1">3.4.21.92</ecNumber>
    </recommendedName>
    <alternativeName>
        <fullName evidence="1">Endopeptidase Clp 1</fullName>
    </alternativeName>
</protein>
<name>CLPP1_BACAN</name>